<proteinExistence type="inferred from homology"/>
<protein>
    <recommendedName>
        <fullName evidence="1">Transcription factor FapR</fullName>
    </recommendedName>
    <alternativeName>
        <fullName evidence="1">Fatty acid and phospholipid biosynthesis regulator</fullName>
    </alternativeName>
</protein>
<dbReference type="EMBL" id="BA000018">
    <property type="protein sequence ID" value="BAB42323.1"/>
    <property type="molecule type" value="Genomic_DNA"/>
</dbReference>
<dbReference type="PIR" id="G89895">
    <property type="entry name" value="G89895"/>
</dbReference>
<dbReference type="SMR" id="P67620"/>
<dbReference type="EnsemblBacteria" id="BAB42323">
    <property type="protein sequence ID" value="BAB42323"/>
    <property type="gene ID" value="BAB42323"/>
</dbReference>
<dbReference type="KEGG" id="sau:SA1071"/>
<dbReference type="HOGENOM" id="CLU_095708_0_0_9"/>
<dbReference type="GO" id="GO:0003677">
    <property type="term" value="F:DNA binding"/>
    <property type="evidence" value="ECO:0007669"/>
    <property type="project" value="UniProtKB-KW"/>
</dbReference>
<dbReference type="GO" id="GO:0003700">
    <property type="term" value="F:DNA-binding transcription factor activity"/>
    <property type="evidence" value="ECO:0007669"/>
    <property type="project" value="UniProtKB-UniRule"/>
</dbReference>
<dbReference type="GO" id="GO:0006633">
    <property type="term" value="P:fatty acid biosynthetic process"/>
    <property type="evidence" value="ECO:0007669"/>
    <property type="project" value="UniProtKB-KW"/>
</dbReference>
<dbReference type="GO" id="GO:0045892">
    <property type="term" value="P:negative regulation of DNA-templated transcription"/>
    <property type="evidence" value="ECO:0007669"/>
    <property type="project" value="UniProtKB-UniRule"/>
</dbReference>
<dbReference type="GO" id="GO:0045717">
    <property type="term" value="P:negative regulation of fatty acid biosynthetic process"/>
    <property type="evidence" value="ECO:0007669"/>
    <property type="project" value="UniProtKB-UniRule"/>
</dbReference>
<dbReference type="CDD" id="cd03440">
    <property type="entry name" value="hot_dog"/>
    <property type="match status" value="1"/>
</dbReference>
<dbReference type="Gene3D" id="3.10.129.10">
    <property type="entry name" value="Hotdog Thioesterase"/>
    <property type="match status" value="1"/>
</dbReference>
<dbReference type="Gene3D" id="1.10.10.10">
    <property type="entry name" value="Winged helix-like DNA-binding domain superfamily/Winged helix DNA-binding domain"/>
    <property type="match status" value="1"/>
</dbReference>
<dbReference type="HAMAP" id="MF_01814">
    <property type="entry name" value="Transcrip_fact_FapR"/>
    <property type="match status" value="1"/>
</dbReference>
<dbReference type="InterPro" id="IPR029069">
    <property type="entry name" value="HotDog_dom_sf"/>
</dbReference>
<dbReference type="InterPro" id="IPR006683">
    <property type="entry name" value="Thioestr_dom"/>
</dbReference>
<dbReference type="InterPro" id="IPR017275">
    <property type="entry name" value="Transcription_factor_FapR"/>
</dbReference>
<dbReference type="InterPro" id="IPR036388">
    <property type="entry name" value="WH-like_DNA-bd_sf"/>
</dbReference>
<dbReference type="NCBIfam" id="NF003359">
    <property type="entry name" value="PRK04424.1"/>
    <property type="match status" value="1"/>
</dbReference>
<dbReference type="Pfam" id="PF03061">
    <property type="entry name" value="4HBT"/>
    <property type="match status" value="1"/>
</dbReference>
<dbReference type="PIRSF" id="PIRSF037733">
    <property type="entry name" value="Transcription_factor_FapR"/>
    <property type="match status" value="1"/>
</dbReference>
<dbReference type="SUPFAM" id="SSF54637">
    <property type="entry name" value="Thioesterase/thiol ester dehydrase-isomerase"/>
    <property type="match status" value="1"/>
</dbReference>
<feature type="chain" id="PRO_0000172832" description="Transcription factor FapR">
    <location>
        <begin position="1"/>
        <end position="185"/>
    </location>
</feature>
<gene>
    <name evidence="1" type="primary">fapR</name>
    <name type="ordered locus">SA1071</name>
</gene>
<evidence type="ECO:0000255" key="1">
    <source>
        <dbReference type="HAMAP-Rule" id="MF_01814"/>
    </source>
</evidence>
<keyword id="KW-0238">DNA-binding</keyword>
<keyword id="KW-0275">Fatty acid biosynthesis</keyword>
<keyword id="KW-0276">Fatty acid metabolism</keyword>
<keyword id="KW-0444">Lipid biosynthesis</keyword>
<keyword id="KW-0443">Lipid metabolism</keyword>
<keyword id="KW-0678">Repressor</keyword>
<keyword id="KW-0804">Transcription</keyword>
<keyword id="KW-0805">Transcription regulation</keyword>
<reference key="1">
    <citation type="journal article" date="2001" name="Lancet">
        <title>Whole genome sequencing of meticillin-resistant Staphylococcus aureus.</title>
        <authorList>
            <person name="Kuroda M."/>
            <person name="Ohta T."/>
            <person name="Uchiyama I."/>
            <person name="Baba T."/>
            <person name="Yuzawa H."/>
            <person name="Kobayashi I."/>
            <person name="Cui L."/>
            <person name="Oguchi A."/>
            <person name="Aoki K."/>
            <person name="Nagai Y."/>
            <person name="Lian J.-Q."/>
            <person name="Ito T."/>
            <person name="Kanamori M."/>
            <person name="Matsumaru H."/>
            <person name="Maruyama A."/>
            <person name="Murakami H."/>
            <person name="Hosoyama A."/>
            <person name="Mizutani-Ui Y."/>
            <person name="Takahashi N.K."/>
            <person name="Sawano T."/>
            <person name="Inoue R."/>
            <person name="Kaito C."/>
            <person name="Sekimizu K."/>
            <person name="Hirakawa H."/>
            <person name="Kuhara S."/>
            <person name="Goto S."/>
            <person name="Yabuzaki J."/>
            <person name="Kanehisa M."/>
            <person name="Yamashita A."/>
            <person name="Oshima K."/>
            <person name="Furuya K."/>
            <person name="Yoshino C."/>
            <person name="Shiba T."/>
            <person name="Hattori M."/>
            <person name="Ogasawara N."/>
            <person name="Hayashi H."/>
            <person name="Hiramatsu K."/>
        </authorList>
    </citation>
    <scope>NUCLEOTIDE SEQUENCE [LARGE SCALE GENOMIC DNA]</scope>
    <source>
        <strain>N315</strain>
    </source>
</reference>
<comment type="function">
    <text evidence="1">Transcriptional factor involved in regulation of membrane lipid biosynthesis by repressing genes involved in fatty acid and phospholipid metabolism.</text>
</comment>
<comment type="similarity">
    <text evidence="1">Belongs to the FapR family.</text>
</comment>
<sequence length="185" mass="21434">MKLKKDKRREAIRQQIDSNPFITDHELSDLFQVSIQTIRLDRTYLNIPELRKRIKLVAEKNYDQISSIEEQEFIGDLIQVNPNVKAQSILDITSDSVFHKTGIARGHVLFAQANSLCVALIKQPTVLTHESSIQFIEKVKLNDTVRAEARVVNQTAKHYYVEVKSYVKHTLVFKGNFKMFYDKRG</sequence>
<name>FAPR_STAAN</name>
<accession>P67620</accession>
<accession>Q99UP0</accession>
<organism>
    <name type="scientific">Staphylococcus aureus (strain N315)</name>
    <dbReference type="NCBI Taxonomy" id="158879"/>
    <lineage>
        <taxon>Bacteria</taxon>
        <taxon>Bacillati</taxon>
        <taxon>Bacillota</taxon>
        <taxon>Bacilli</taxon>
        <taxon>Bacillales</taxon>
        <taxon>Staphylococcaceae</taxon>
        <taxon>Staphylococcus</taxon>
    </lineage>
</organism>